<dbReference type="EC" id="2.5.1.141" evidence="1"/>
<dbReference type="EMBL" id="CP000560">
    <property type="protein sequence ID" value="ABS73837.1"/>
    <property type="molecule type" value="Genomic_DNA"/>
</dbReference>
<dbReference type="SMR" id="A7Z4B1"/>
<dbReference type="GeneID" id="93080607"/>
<dbReference type="KEGG" id="bay:RBAM_014740"/>
<dbReference type="HOGENOM" id="CLU_029631_0_0_9"/>
<dbReference type="UniPathway" id="UPA00834">
    <property type="reaction ID" value="UER00712"/>
</dbReference>
<dbReference type="Proteomes" id="UP000001120">
    <property type="component" value="Chromosome"/>
</dbReference>
<dbReference type="GO" id="GO:0005886">
    <property type="term" value="C:plasma membrane"/>
    <property type="evidence" value="ECO:0007669"/>
    <property type="project" value="UniProtKB-SubCell"/>
</dbReference>
<dbReference type="GO" id="GO:0008495">
    <property type="term" value="F:protoheme IX farnesyltransferase activity"/>
    <property type="evidence" value="ECO:0007669"/>
    <property type="project" value="UniProtKB-UniRule"/>
</dbReference>
<dbReference type="GO" id="GO:0048034">
    <property type="term" value="P:heme O biosynthetic process"/>
    <property type="evidence" value="ECO:0007669"/>
    <property type="project" value="UniProtKB-UniRule"/>
</dbReference>
<dbReference type="CDD" id="cd13957">
    <property type="entry name" value="PT_UbiA_Cox10"/>
    <property type="match status" value="1"/>
</dbReference>
<dbReference type="FunFam" id="1.10.357.140:FF:000001">
    <property type="entry name" value="Protoheme IX farnesyltransferase"/>
    <property type="match status" value="1"/>
</dbReference>
<dbReference type="Gene3D" id="1.10.357.140">
    <property type="entry name" value="UbiA prenyltransferase"/>
    <property type="match status" value="1"/>
</dbReference>
<dbReference type="HAMAP" id="MF_00154">
    <property type="entry name" value="CyoE_CtaB"/>
    <property type="match status" value="1"/>
</dbReference>
<dbReference type="InterPro" id="IPR006369">
    <property type="entry name" value="Protohaem_IX_farnesylTrfase"/>
</dbReference>
<dbReference type="InterPro" id="IPR000537">
    <property type="entry name" value="UbiA_prenyltransferase"/>
</dbReference>
<dbReference type="InterPro" id="IPR030470">
    <property type="entry name" value="UbiA_prenylTrfase_CS"/>
</dbReference>
<dbReference type="InterPro" id="IPR044878">
    <property type="entry name" value="UbiA_sf"/>
</dbReference>
<dbReference type="NCBIfam" id="TIGR01473">
    <property type="entry name" value="cyoE_ctaB"/>
    <property type="match status" value="1"/>
</dbReference>
<dbReference type="PANTHER" id="PTHR43448">
    <property type="entry name" value="PROTOHEME IX FARNESYLTRANSFERASE, MITOCHONDRIAL"/>
    <property type="match status" value="1"/>
</dbReference>
<dbReference type="PANTHER" id="PTHR43448:SF2">
    <property type="entry name" value="PROTOHEME IX FARNESYLTRANSFERASE, MITOCHONDRIAL"/>
    <property type="match status" value="1"/>
</dbReference>
<dbReference type="Pfam" id="PF01040">
    <property type="entry name" value="UbiA"/>
    <property type="match status" value="1"/>
</dbReference>
<dbReference type="PROSITE" id="PS00943">
    <property type="entry name" value="UBIA"/>
    <property type="match status" value="1"/>
</dbReference>
<organism>
    <name type="scientific">Bacillus velezensis (strain DSM 23117 / BGSC 10A6 / LMG 26770 / FZB42)</name>
    <name type="common">Bacillus amyloliquefaciens subsp. plantarum</name>
    <dbReference type="NCBI Taxonomy" id="326423"/>
    <lineage>
        <taxon>Bacteria</taxon>
        <taxon>Bacillati</taxon>
        <taxon>Bacillota</taxon>
        <taxon>Bacilli</taxon>
        <taxon>Bacillales</taxon>
        <taxon>Bacillaceae</taxon>
        <taxon>Bacillus</taxon>
        <taxon>Bacillus amyloliquefaciens group</taxon>
    </lineage>
</organism>
<proteinExistence type="inferred from homology"/>
<evidence type="ECO:0000255" key="1">
    <source>
        <dbReference type="HAMAP-Rule" id="MF_00154"/>
    </source>
</evidence>
<reference key="1">
    <citation type="journal article" date="2007" name="Nat. Biotechnol.">
        <title>Comparative analysis of the complete genome sequence of the plant growth-promoting bacterium Bacillus amyloliquefaciens FZB42.</title>
        <authorList>
            <person name="Chen X.H."/>
            <person name="Koumoutsi A."/>
            <person name="Scholz R."/>
            <person name="Eisenreich A."/>
            <person name="Schneider K."/>
            <person name="Heinemeyer I."/>
            <person name="Morgenstern B."/>
            <person name="Voss B."/>
            <person name="Hess W.R."/>
            <person name="Reva O."/>
            <person name="Junge H."/>
            <person name="Voigt B."/>
            <person name="Jungblut P.R."/>
            <person name="Vater J."/>
            <person name="Suessmuth R."/>
            <person name="Liesegang H."/>
            <person name="Strittmatter A."/>
            <person name="Gottschalk G."/>
            <person name="Borriss R."/>
        </authorList>
    </citation>
    <scope>NUCLEOTIDE SEQUENCE [LARGE SCALE GENOMIC DNA]</scope>
    <source>
        <strain>DSM 23117 / BGSC 10A6 / LMG 26770 / FZB42</strain>
    </source>
</reference>
<gene>
    <name evidence="1" type="primary">ctaB2</name>
    <name type="ordered locus">RBAM_014740</name>
</gene>
<keyword id="KW-1003">Cell membrane</keyword>
<keyword id="KW-0350">Heme biosynthesis</keyword>
<keyword id="KW-0472">Membrane</keyword>
<keyword id="KW-0808">Transferase</keyword>
<keyword id="KW-0812">Transmembrane</keyword>
<keyword id="KW-1133">Transmembrane helix</keyword>
<protein>
    <recommendedName>
        <fullName evidence="1">Protoheme IX farnesyltransferase 2</fullName>
        <ecNumber evidence="1">2.5.1.141</ecNumber>
    </recommendedName>
    <alternativeName>
        <fullName evidence="1">Heme B farnesyltransferase 2</fullName>
    </alternativeName>
    <alternativeName>
        <fullName evidence="1">Heme O synthase 2</fullName>
    </alternativeName>
</protein>
<feature type="chain" id="PRO_0000327000" description="Protoheme IX farnesyltransferase 2">
    <location>
        <begin position="1"/>
        <end position="305"/>
    </location>
</feature>
<feature type="transmembrane region" description="Helical" evidence="1">
    <location>
        <begin position="38"/>
        <end position="58"/>
    </location>
</feature>
<feature type="transmembrane region" description="Helical" evidence="1">
    <location>
        <begin position="60"/>
        <end position="80"/>
    </location>
</feature>
<feature type="transmembrane region" description="Helical" evidence="1">
    <location>
        <begin position="115"/>
        <end position="135"/>
    </location>
</feature>
<feature type="transmembrane region" description="Helical" evidence="1">
    <location>
        <begin position="157"/>
        <end position="177"/>
    </location>
</feature>
<feature type="transmembrane region" description="Helical" evidence="1">
    <location>
        <begin position="181"/>
        <end position="201"/>
    </location>
</feature>
<feature type="transmembrane region" description="Helical" evidence="1">
    <location>
        <begin position="236"/>
        <end position="256"/>
    </location>
</feature>
<feature type="transmembrane region" description="Helical" evidence="1">
    <location>
        <begin position="285"/>
        <end position="305"/>
    </location>
</feature>
<sequence>MANSRILNDTAIDGQIEETTAWKDFLSLIKIGIVNSNLITTFTGMWLALHISGLSFLGNLNTVLLTLIGSSLIIAGSCAVNNYYDRDIDHLMERTKVRPTVTGKIQPNQALWSGILLIALGLIMLLMTTVMAAVIGFIGVFTYVVLYTMWTKRRYTINTVVGSVSGAVPPLIGWTAVEGHIGVVAWVLFMILFIWQIPHFLALAIKKTEDYRAANIPMLPVVHGFEVTKRQIIVWVACLLPLPFFLGSLGLPIVILGTLLNVGWLVLGLMGFRMKNIMKWATLMFVYSLNYMTIYFVAMVVFTLF</sequence>
<name>COXX2_BACVZ</name>
<accession>A7Z4B1</accession>
<comment type="function">
    <text evidence="1">Converts heme B (protoheme IX) to heme O by substitution of the vinyl group on carbon 2 of heme B porphyrin ring with a hydroxyethyl farnesyl side group.</text>
</comment>
<comment type="catalytic activity">
    <reaction evidence="1">
        <text>heme b + (2E,6E)-farnesyl diphosphate + H2O = Fe(II)-heme o + diphosphate</text>
        <dbReference type="Rhea" id="RHEA:28070"/>
        <dbReference type="ChEBI" id="CHEBI:15377"/>
        <dbReference type="ChEBI" id="CHEBI:33019"/>
        <dbReference type="ChEBI" id="CHEBI:60344"/>
        <dbReference type="ChEBI" id="CHEBI:60530"/>
        <dbReference type="ChEBI" id="CHEBI:175763"/>
        <dbReference type="EC" id="2.5.1.141"/>
    </reaction>
</comment>
<comment type="pathway">
    <text evidence="1">Porphyrin-containing compound metabolism; heme O biosynthesis; heme O from protoheme: step 1/1.</text>
</comment>
<comment type="subunit">
    <text evidence="1">Interacts with CtaA.</text>
</comment>
<comment type="subcellular location">
    <subcellularLocation>
        <location evidence="1">Cell membrane</location>
        <topology evidence="1">Multi-pass membrane protein</topology>
    </subcellularLocation>
</comment>
<comment type="miscellaneous">
    <text evidence="1">Carbon 2 of the heme B porphyrin ring is defined according to the Fischer nomenclature.</text>
</comment>
<comment type="similarity">
    <text evidence="1">Belongs to the UbiA prenyltransferase family. Protoheme IX farnesyltransferase subfamily.</text>
</comment>